<gene>
    <name evidence="1" type="primary">rapA</name>
    <name type="ordered locus">BWG_0055</name>
</gene>
<proteinExistence type="inferred from homology"/>
<feature type="chain" id="PRO_1000216056" description="RNA polymerase-associated protein RapA">
    <location>
        <begin position="1"/>
        <end position="968"/>
    </location>
</feature>
<feature type="domain" description="Helicase ATP-binding" evidence="1">
    <location>
        <begin position="164"/>
        <end position="334"/>
    </location>
</feature>
<feature type="domain" description="Helicase C-terminal" evidence="1">
    <location>
        <begin position="490"/>
        <end position="662"/>
    </location>
</feature>
<feature type="short sequence motif" description="DEAH box">
    <location>
        <begin position="280"/>
        <end position="283"/>
    </location>
</feature>
<feature type="binding site" evidence="1">
    <location>
        <begin position="177"/>
        <end position="184"/>
    </location>
    <ligand>
        <name>ATP</name>
        <dbReference type="ChEBI" id="CHEBI:30616"/>
    </ligand>
</feature>
<protein>
    <recommendedName>
        <fullName evidence="1">RNA polymerase-associated protein RapA</fullName>
        <ecNumber evidence="1">3.6.4.-</ecNumber>
    </recommendedName>
    <alternativeName>
        <fullName evidence="1">ATP-dependent helicase HepA</fullName>
    </alternativeName>
</protein>
<accession>C4ZPY3</accession>
<reference key="1">
    <citation type="journal article" date="2009" name="J. Bacteriol.">
        <title>Genomic sequencing reveals regulatory mutations and recombinational events in the widely used MC4100 lineage of Escherichia coli K-12.</title>
        <authorList>
            <person name="Ferenci T."/>
            <person name="Zhou Z."/>
            <person name="Betteridge T."/>
            <person name="Ren Y."/>
            <person name="Liu Y."/>
            <person name="Feng L."/>
            <person name="Reeves P.R."/>
            <person name="Wang L."/>
        </authorList>
    </citation>
    <scope>NUCLEOTIDE SEQUENCE [LARGE SCALE GENOMIC DNA]</scope>
    <source>
        <strain>K12 / MC4100 / BW2952</strain>
    </source>
</reference>
<evidence type="ECO:0000255" key="1">
    <source>
        <dbReference type="HAMAP-Rule" id="MF_01821"/>
    </source>
</evidence>
<sequence length="968" mass="109769">MPFTLGQRWISDTESELGLGTVVAVDARTVTLLFPSTGENRLYARSDSPVTRVMFNPGDTITSHDGWQMQVEEVKEENGLLTYIGTRLDTEESGVALREVFLDSKLVFSKPQDRLFAGQIDRMDRFALRYRARKYSSEQFRMPYSGLRGQRTSLIPHQLNIAHDVGRRHAPRVLLADEVGLGKTIEAGMILHQQLLSGAAERVLIIVPETLQHQWLVEMLRRFNLRFALFDDERYAEAQHDAYNPFDTEQLVICSLDFARRSKQRLEHLCEAEWDLLVVDEAHHLVWSEDAPSREYQAIEQLAEHVPGVLLLTATPEQLGMESHFARLRLLDPNRFHDFAQFVEEQKNYRPVADAVAMLLAGNKLSNDELNMLGEMIGEQDIEPLLQAANSDSEDAQSARQELVSMLMDRHGTSRVLFRNTRNGVKGFPKRELHTIKLPLPTQYQTAIKVSGIMGARKSAEDRARDMLYPERIYQEFEGDNATWWNFDPRVEWLMGYLTSHRSQKVLVICAKAATALQLEQVLREREGIRAAVFHEGMSIIERDRAAAWFAEEDTGAQVLLCSEIGSEGRNFQFASHMVMFDLPFNPDLLEQRIGRLDRIGQAHDIQIHVPYLEKTAQSVLVRWYHEGLDAFEHTCPTGRTIYDSVYNDLINYLASPDQTEGFDDLIKNCREQHEALKAQLEQGRDRLLEIHSNGGEKAQALAESIEEQDDDTNLIAFAMNLFDIIGINQDDRGDNMIVLTPSDHMLVPDFPGLSEDGITITFDREVALAREDAQFITWEHPLIRNGLDLILSGDTGSSTISLLKNKALPVGTLLVELIYVVEAQAPKQLQLNRFLPPTPVRMLLDKNGNNLAAQVEFETFNRQLNAVNRHTGSKLVNAVQQDVHAILQLGEAQIEKSARALIDAARNEADEKLSAELSRLEALRAVNPNIRDDELTAIESNRQQVMESLDQAGWRLDALRLIVVTHQ</sequence>
<name>RAPA_ECOBW</name>
<comment type="function">
    <text evidence="1">Transcription regulator that activates transcription by stimulating RNA polymerase (RNAP) recycling in case of stress conditions such as supercoiled DNA or high salt concentrations. Probably acts by releasing the RNAP, when it is trapped or immobilized on tightly supercoiled DNA. Does not activate transcription on linear DNA. Probably not involved in DNA repair.</text>
</comment>
<comment type="subunit">
    <text evidence="1">Interacts with the RNAP. Has a higher affinity for the core RNAP than for the holoenzyme. Its ATPase activity is stimulated by binding to RNAP.</text>
</comment>
<comment type="similarity">
    <text evidence="1">Belongs to the SNF2/RAD54 helicase family. RapA subfamily.</text>
</comment>
<organism>
    <name type="scientific">Escherichia coli (strain K12 / MC4100 / BW2952)</name>
    <dbReference type="NCBI Taxonomy" id="595496"/>
    <lineage>
        <taxon>Bacteria</taxon>
        <taxon>Pseudomonadati</taxon>
        <taxon>Pseudomonadota</taxon>
        <taxon>Gammaproteobacteria</taxon>
        <taxon>Enterobacterales</taxon>
        <taxon>Enterobacteriaceae</taxon>
        <taxon>Escherichia</taxon>
    </lineage>
</organism>
<keyword id="KW-0010">Activator</keyword>
<keyword id="KW-0067">ATP-binding</keyword>
<keyword id="KW-0238">DNA-binding</keyword>
<keyword id="KW-0347">Helicase</keyword>
<keyword id="KW-0378">Hydrolase</keyword>
<keyword id="KW-0547">Nucleotide-binding</keyword>
<keyword id="KW-0804">Transcription</keyword>
<keyword id="KW-0805">Transcription regulation</keyword>
<dbReference type="EC" id="3.6.4.-" evidence="1"/>
<dbReference type="EMBL" id="CP001396">
    <property type="protein sequence ID" value="ACR65501.1"/>
    <property type="molecule type" value="Genomic_DNA"/>
</dbReference>
<dbReference type="RefSeq" id="WP_001117011.1">
    <property type="nucleotide sequence ID" value="NC_012759.1"/>
</dbReference>
<dbReference type="SMR" id="C4ZPY3"/>
<dbReference type="GeneID" id="75202125"/>
<dbReference type="KEGG" id="ebw:BWG_0055"/>
<dbReference type="HOGENOM" id="CLU_011520_0_0_6"/>
<dbReference type="GO" id="GO:0005524">
    <property type="term" value="F:ATP binding"/>
    <property type="evidence" value="ECO:0007669"/>
    <property type="project" value="UniProtKB-UniRule"/>
</dbReference>
<dbReference type="GO" id="GO:0003677">
    <property type="term" value="F:DNA binding"/>
    <property type="evidence" value="ECO:0007669"/>
    <property type="project" value="UniProtKB-KW"/>
</dbReference>
<dbReference type="GO" id="GO:0004386">
    <property type="term" value="F:helicase activity"/>
    <property type="evidence" value="ECO:0007669"/>
    <property type="project" value="UniProtKB-UniRule"/>
</dbReference>
<dbReference type="GO" id="GO:0016817">
    <property type="term" value="F:hydrolase activity, acting on acid anhydrides"/>
    <property type="evidence" value="ECO:0007669"/>
    <property type="project" value="InterPro"/>
</dbReference>
<dbReference type="GO" id="GO:0006355">
    <property type="term" value="P:regulation of DNA-templated transcription"/>
    <property type="evidence" value="ECO:0007669"/>
    <property type="project" value="UniProtKB-UniRule"/>
</dbReference>
<dbReference type="CDD" id="cd18011">
    <property type="entry name" value="DEXDc_RapA"/>
    <property type="match status" value="1"/>
</dbReference>
<dbReference type="CDD" id="cd18793">
    <property type="entry name" value="SF2_C_SNF"/>
    <property type="match status" value="1"/>
</dbReference>
<dbReference type="FunFam" id="2.30.30.140:FF:000020">
    <property type="entry name" value="RNA polymerase-associated protein RapA"/>
    <property type="match status" value="1"/>
</dbReference>
<dbReference type="FunFam" id="2.30.30.930:FF:000001">
    <property type="entry name" value="RNA polymerase-associated protein RapA"/>
    <property type="match status" value="1"/>
</dbReference>
<dbReference type="FunFam" id="3.30.360.80:FF:000001">
    <property type="entry name" value="RNA polymerase-associated protein RapA"/>
    <property type="match status" value="1"/>
</dbReference>
<dbReference type="FunFam" id="3.40.50.10810:FF:000012">
    <property type="entry name" value="RNA polymerase-associated protein RapA"/>
    <property type="match status" value="1"/>
</dbReference>
<dbReference type="FunFam" id="3.40.50.300:FF:000350">
    <property type="entry name" value="RNA polymerase-associated protein RapA"/>
    <property type="match status" value="1"/>
</dbReference>
<dbReference type="Gene3D" id="2.30.30.140">
    <property type="match status" value="1"/>
</dbReference>
<dbReference type="Gene3D" id="2.30.30.930">
    <property type="match status" value="1"/>
</dbReference>
<dbReference type="Gene3D" id="3.30.360.80">
    <property type="match status" value="1"/>
</dbReference>
<dbReference type="Gene3D" id="6.10.140.1500">
    <property type="match status" value="1"/>
</dbReference>
<dbReference type="Gene3D" id="6.10.140.2230">
    <property type="match status" value="1"/>
</dbReference>
<dbReference type="Gene3D" id="3.40.50.300">
    <property type="entry name" value="P-loop containing nucleotide triphosphate hydrolases"/>
    <property type="match status" value="1"/>
</dbReference>
<dbReference type="Gene3D" id="3.40.50.10810">
    <property type="entry name" value="Tandem AAA-ATPase domain"/>
    <property type="match status" value="1"/>
</dbReference>
<dbReference type="HAMAP" id="MF_01821">
    <property type="entry name" value="Helicase_RapA"/>
    <property type="match status" value="1"/>
</dbReference>
<dbReference type="InterPro" id="IPR014001">
    <property type="entry name" value="Helicase_ATP-bd"/>
</dbReference>
<dbReference type="InterPro" id="IPR001650">
    <property type="entry name" value="Helicase_C-like"/>
</dbReference>
<dbReference type="InterPro" id="IPR023949">
    <property type="entry name" value="Helicase_RapA"/>
</dbReference>
<dbReference type="InterPro" id="IPR027417">
    <property type="entry name" value="P-loop_NTPase"/>
</dbReference>
<dbReference type="InterPro" id="IPR022737">
    <property type="entry name" value="RapA_C"/>
</dbReference>
<dbReference type="InterPro" id="IPR038718">
    <property type="entry name" value="SNF2-like_sf"/>
</dbReference>
<dbReference type="InterPro" id="IPR049730">
    <property type="entry name" value="SNF2/RAD54-like_C"/>
</dbReference>
<dbReference type="InterPro" id="IPR000330">
    <property type="entry name" value="SNF2_N"/>
</dbReference>
<dbReference type="InterPro" id="IPR040765">
    <property type="entry name" value="Tudor_1_RapA"/>
</dbReference>
<dbReference type="InterPro" id="IPR040766">
    <property type="entry name" value="Tudor_2_RapA"/>
</dbReference>
<dbReference type="NCBIfam" id="NF003426">
    <property type="entry name" value="PRK04914.1"/>
    <property type="match status" value="1"/>
</dbReference>
<dbReference type="PANTHER" id="PTHR45766">
    <property type="entry name" value="DNA ANNEALING HELICASE AND ENDONUCLEASE ZRANB3 FAMILY MEMBER"/>
    <property type="match status" value="1"/>
</dbReference>
<dbReference type="PANTHER" id="PTHR45766:SF6">
    <property type="entry name" value="SWI_SNF-RELATED MATRIX-ASSOCIATED ACTIN-DEPENDENT REGULATOR OF CHROMATIN SUBFAMILY A-LIKE PROTEIN 1"/>
    <property type="match status" value="1"/>
</dbReference>
<dbReference type="Pfam" id="PF00271">
    <property type="entry name" value="Helicase_C"/>
    <property type="match status" value="1"/>
</dbReference>
<dbReference type="Pfam" id="PF12137">
    <property type="entry name" value="RapA_C"/>
    <property type="match status" value="1"/>
</dbReference>
<dbReference type="Pfam" id="PF00176">
    <property type="entry name" value="SNF2-rel_dom"/>
    <property type="match status" value="1"/>
</dbReference>
<dbReference type="Pfam" id="PF18339">
    <property type="entry name" value="Tudor_1_RapA"/>
    <property type="match status" value="1"/>
</dbReference>
<dbReference type="Pfam" id="PF18337">
    <property type="entry name" value="Tudor_RapA"/>
    <property type="match status" value="1"/>
</dbReference>
<dbReference type="SMART" id="SM00487">
    <property type="entry name" value="DEXDc"/>
    <property type="match status" value="1"/>
</dbReference>
<dbReference type="SMART" id="SM00490">
    <property type="entry name" value="HELICc"/>
    <property type="match status" value="1"/>
</dbReference>
<dbReference type="SUPFAM" id="SSF52540">
    <property type="entry name" value="P-loop containing nucleoside triphosphate hydrolases"/>
    <property type="match status" value="2"/>
</dbReference>
<dbReference type="PROSITE" id="PS51192">
    <property type="entry name" value="HELICASE_ATP_BIND_1"/>
    <property type="match status" value="1"/>
</dbReference>
<dbReference type="PROSITE" id="PS51194">
    <property type="entry name" value="HELICASE_CTER"/>
    <property type="match status" value="1"/>
</dbReference>